<gene>
    <name type="primary">Fgfr1op2</name>
</gene>
<evidence type="ECO:0000250" key="1"/>
<evidence type="ECO:0000250" key="2">
    <source>
        <dbReference type="UniProtKB" id="Q9CRA9"/>
    </source>
</evidence>
<evidence type="ECO:0000255" key="3"/>
<evidence type="ECO:0000256" key="4">
    <source>
        <dbReference type="SAM" id="MobiDB-lite"/>
    </source>
</evidence>
<evidence type="ECO:0000269" key="5">
    <source>
    </source>
</evidence>
<evidence type="ECO:0000269" key="6">
    <source>
    </source>
</evidence>
<evidence type="ECO:0000303" key="7">
    <source>
    </source>
</evidence>
<evidence type="ECO:0000305" key="8"/>
<feature type="chain" id="PRO_0000299044" description="FGFR1 oncogene partner 2 homolog">
    <location>
        <begin position="1"/>
        <end position="253"/>
    </location>
</feature>
<feature type="region of interest" description="Disordered" evidence="4">
    <location>
        <begin position="231"/>
        <end position="253"/>
    </location>
</feature>
<feature type="coiled-coil region" evidence="3">
    <location>
        <begin position="5"/>
        <end position="104"/>
    </location>
</feature>
<feature type="coiled-coil region" evidence="3">
    <location>
        <begin position="160"/>
        <end position="223"/>
    </location>
</feature>
<feature type="compositionally biased region" description="Polar residues" evidence="4">
    <location>
        <begin position="235"/>
        <end position="253"/>
    </location>
</feature>
<feature type="modified residue" description="Phosphoserine" evidence="2">
    <location>
        <position position="140"/>
    </location>
</feature>
<feature type="splice variant" id="VSP_027542" description="In isoform 2." evidence="7">
    <location>
        <begin position="133"/>
        <end position="170"/>
    </location>
</feature>
<feature type="sequence conflict" description="In Ref. 1; AAR20448/AAR20449." evidence="8" ref="1">
    <original>L</original>
    <variation>F</variation>
    <location>
        <position position="79"/>
    </location>
</feature>
<feature type="sequence conflict" description="In Ref. 1; AAR20448/AAR20449." evidence="8" ref="1">
    <original>E</original>
    <variation>Q</variation>
    <location>
        <position position="202"/>
    </location>
</feature>
<feature type="sequence conflict" description="In Ref. 1; AAR20448/AAR20449." evidence="8" ref="1">
    <original>R</original>
    <variation>Q</variation>
    <location>
        <position position="229"/>
    </location>
</feature>
<accession>Q6TA25</accession>
<accession>Q5PPH1</accession>
<accession>Q6TA26</accession>
<reference key="1">
    <citation type="journal article" date="2002" name="J. Dent. Res.">
        <title>Molecular cloning of wound inducible transcript (wit 3.0) differentially expressed in edentulous oral mucosa undergoing tooth extraction wound-healing.</title>
        <authorList>
            <person name="Sukotjo C."/>
            <person name="Abanmy A.A."/>
            <person name="Ogawa T."/>
            <person name="Nishimura I."/>
        </authorList>
    </citation>
    <scope>NUCLEOTIDE SEQUENCE [MRNA] (ISOFORMS 1 AND 2)</scope>
    <scope>INDUCTION</scope>
</reference>
<reference key="2">
    <citation type="journal article" date="2004" name="Genome Res.">
        <title>The status, quality, and expansion of the NIH full-length cDNA project: the Mammalian Gene Collection (MGC).</title>
        <authorList>
            <consortium name="The MGC Project Team"/>
        </authorList>
    </citation>
    <scope>NUCLEOTIDE SEQUENCE [LARGE SCALE MRNA]</scope>
    <source>
        <tissue>Brain</tissue>
    </source>
</reference>
<reference key="3">
    <citation type="journal article" date="2003" name="J. Biol. Chem.">
        <title>Oral fibroblast expression of wound-inducible transcript 3.0 (wit3.0) accelerates the collagen gel contraction in vitro.</title>
        <authorList>
            <person name="Sukotjo C."/>
            <person name="Lin A."/>
            <person name="Song K."/>
            <person name="Ogawa T."/>
            <person name="Wu B."/>
            <person name="Nishimura I."/>
        </authorList>
    </citation>
    <scope>FUNCTION</scope>
    <scope>SUBCELLULAR LOCATION</scope>
</reference>
<comment type="function">
    <text evidence="6">May be involved in wound healing pathway underlying the favorable early wound closure characteristics of oral mucosa. Accelerates the collagen gel contraction in vitro.</text>
</comment>
<comment type="subcellular location">
    <subcellularLocation>
        <location evidence="1">Cytoplasm</location>
    </subcellularLocation>
</comment>
<comment type="alternative products">
    <event type="alternative splicing"/>
    <isoform>
        <id>Q6TA25-1</id>
        <name>1</name>
        <name>Beta</name>
        <sequence type="displayed"/>
    </isoform>
    <isoform>
        <id>Q6TA25-2</id>
        <name>2</name>
        <name>Alpha</name>
        <sequence type="described" ref="VSP_027542"/>
    </isoform>
</comment>
<comment type="induction">
    <text evidence="5">By wound, in oral mucosa undergoing tooth extraction.</text>
</comment>
<comment type="similarity">
    <text evidence="8">Belongs to the SIKE family.</text>
</comment>
<organism>
    <name type="scientific">Rattus norvegicus</name>
    <name type="common">Rat</name>
    <dbReference type="NCBI Taxonomy" id="10116"/>
    <lineage>
        <taxon>Eukaryota</taxon>
        <taxon>Metazoa</taxon>
        <taxon>Chordata</taxon>
        <taxon>Craniata</taxon>
        <taxon>Vertebrata</taxon>
        <taxon>Euteleostomi</taxon>
        <taxon>Mammalia</taxon>
        <taxon>Eutheria</taxon>
        <taxon>Euarchontoglires</taxon>
        <taxon>Glires</taxon>
        <taxon>Rodentia</taxon>
        <taxon>Myomorpha</taxon>
        <taxon>Muroidea</taxon>
        <taxon>Muridae</taxon>
        <taxon>Murinae</taxon>
        <taxon>Rattus</taxon>
    </lineage>
</organism>
<protein>
    <recommendedName>
        <fullName>FGFR1 oncogene partner 2 homolog</fullName>
    </recommendedName>
    <alternativeName>
        <fullName>Wound-inducible transcript 3.0 protein</fullName>
        <shortName>Wit3.0</shortName>
    </alternativeName>
</protein>
<name>FGOP2_RAT</name>
<sequence>MSCTIEKALADAKALVERLRDHDDAAESLIEQTTALSKRVEAMKQYQEEIQELNEVARHRPRSTLVMGIQQENRQIRELQQENKELRTSLEEHQSALELIMSKYREQMFRLLMASKKDDPGIIMKLKEQHSKIDMVHRNSCEGFFLDASRHILEAPQHGLERRHLEANQNELQAHVDQITEMAAVMRKAIEIDEQQGCKEQERIFQLEQENKGLREILQITRESFLNLRKDDASESTSLSALVTNSDLSLRKS</sequence>
<proteinExistence type="evidence at transcript level"/>
<dbReference type="EMBL" id="AY426739">
    <property type="protein sequence ID" value="AAR20448.1"/>
    <property type="molecule type" value="mRNA"/>
</dbReference>
<dbReference type="EMBL" id="AY426740">
    <property type="protein sequence ID" value="AAR20449.1"/>
    <property type="molecule type" value="mRNA"/>
</dbReference>
<dbReference type="EMBL" id="BC087696">
    <property type="protein sequence ID" value="AAH87696.1"/>
    <property type="molecule type" value="mRNA"/>
</dbReference>
<dbReference type="RefSeq" id="NP_958824.2">
    <molecule id="Q6TA25-1"/>
    <property type="nucleotide sequence ID" value="NM_201421.2"/>
</dbReference>
<dbReference type="RefSeq" id="XP_006237750.1">
    <molecule id="Q6TA25-2"/>
    <property type="nucleotide sequence ID" value="XM_006237688.4"/>
</dbReference>
<dbReference type="SMR" id="Q6TA25"/>
<dbReference type="FunCoup" id="Q6TA25">
    <property type="interactions" value="3073"/>
</dbReference>
<dbReference type="STRING" id="10116.ENSRNOP00000039568"/>
<dbReference type="iPTMnet" id="Q6TA25"/>
<dbReference type="PhosphoSitePlus" id="Q6TA25"/>
<dbReference type="PaxDb" id="10116-ENSRNOP00000039568"/>
<dbReference type="Ensembl" id="ENSRNOT00000002476.6">
    <molecule id="Q6TA25-2"/>
    <property type="protein sequence ID" value="ENSRNOP00000002476.2"/>
    <property type="gene ID" value="ENSRNOG00000001811.7"/>
</dbReference>
<dbReference type="GeneID" id="362463"/>
<dbReference type="KEGG" id="rno:362463"/>
<dbReference type="UCSC" id="RGD:1303233">
    <molecule id="Q6TA25-1"/>
    <property type="organism name" value="rat"/>
</dbReference>
<dbReference type="AGR" id="RGD:1303233"/>
<dbReference type="CTD" id="26127"/>
<dbReference type="RGD" id="1303233">
    <property type="gene designation" value="Fgfr1op2"/>
</dbReference>
<dbReference type="VEuPathDB" id="HostDB:ENSRNOG00000001811"/>
<dbReference type="eggNOG" id="ENOG502QSAD">
    <property type="taxonomic scope" value="Eukaryota"/>
</dbReference>
<dbReference type="GeneTree" id="ENSGT00390000018003"/>
<dbReference type="HOGENOM" id="CLU_073167_1_0_1"/>
<dbReference type="InParanoid" id="Q6TA25"/>
<dbReference type="PhylomeDB" id="Q6TA25"/>
<dbReference type="TreeFam" id="TF324337"/>
<dbReference type="PRO" id="PR:Q6TA25"/>
<dbReference type="Proteomes" id="UP000002494">
    <property type="component" value="Chromosome 4"/>
</dbReference>
<dbReference type="Bgee" id="ENSRNOG00000001811">
    <property type="expression patterns" value="Expressed in thymus and 20 other cell types or tissues"/>
</dbReference>
<dbReference type="GO" id="GO:0005737">
    <property type="term" value="C:cytoplasm"/>
    <property type="evidence" value="ECO:0000314"/>
    <property type="project" value="MGI"/>
</dbReference>
<dbReference type="GO" id="GO:0042802">
    <property type="term" value="F:identical protein binding"/>
    <property type="evidence" value="ECO:0000266"/>
    <property type="project" value="RGD"/>
</dbReference>
<dbReference type="GO" id="GO:0009611">
    <property type="term" value="P:response to wounding"/>
    <property type="evidence" value="ECO:0000318"/>
    <property type="project" value="GO_Central"/>
</dbReference>
<dbReference type="GO" id="GO:0042060">
    <property type="term" value="P:wound healing"/>
    <property type="evidence" value="ECO:0000266"/>
    <property type="project" value="RGD"/>
</dbReference>
<dbReference type="InterPro" id="IPR008555">
    <property type="entry name" value="SIKE"/>
</dbReference>
<dbReference type="PANTHER" id="PTHR12186:SF3">
    <property type="entry name" value="FGFR1 ONCOGENE PARTNER 2"/>
    <property type="match status" value="1"/>
</dbReference>
<dbReference type="PANTHER" id="PTHR12186">
    <property type="entry name" value="SIKE FAMILY MEMBER"/>
    <property type="match status" value="1"/>
</dbReference>
<dbReference type="Pfam" id="PF05769">
    <property type="entry name" value="SIKE"/>
    <property type="match status" value="2"/>
</dbReference>
<keyword id="KW-0025">Alternative splicing</keyword>
<keyword id="KW-0175">Coiled coil</keyword>
<keyword id="KW-0963">Cytoplasm</keyword>
<keyword id="KW-0597">Phosphoprotein</keyword>
<keyword id="KW-1185">Reference proteome</keyword>